<gene>
    <name evidence="1" type="primary">dnaG</name>
    <name type="ordered locus">PH1699</name>
</gene>
<keyword id="KW-0235">DNA replication</keyword>
<keyword id="KW-0240">DNA-directed RNA polymerase</keyword>
<keyword id="KW-0271">Exosome</keyword>
<keyword id="KW-0460">Magnesium</keyword>
<keyword id="KW-0479">Metal-binding</keyword>
<keyword id="KW-0548">Nucleotidyltransferase</keyword>
<keyword id="KW-0639">Primosome</keyword>
<keyword id="KW-0804">Transcription</keyword>
<keyword id="KW-0808">Transferase</keyword>
<organism>
    <name type="scientific">Pyrococcus horikoshii (strain ATCC 700860 / DSM 12428 / JCM 9974 / NBRC 100139 / OT-3)</name>
    <dbReference type="NCBI Taxonomy" id="70601"/>
    <lineage>
        <taxon>Archaea</taxon>
        <taxon>Methanobacteriati</taxon>
        <taxon>Methanobacteriota</taxon>
        <taxon>Thermococci</taxon>
        <taxon>Thermococcales</taxon>
        <taxon>Thermococcaceae</taxon>
        <taxon>Pyrococcus</taxon>
    </lineage>
</organism>
<protein>
    <recommendedName>
        <fullName evidence="1">DNA primase DnaG</fullName>
        <ecNumber evidence="1">2.7.7.101</ecNumber>
    </recommendedName>
</protein>
<comment type="function">
    <text evidence="1">RNA polymerase that catalyzes the synthesis of short RNA molecules used as primers for DNA polymerase during DNA replication. Also part of the exosome, which is a complex involved in RNA degradation. Acts as a poly(A)-binding protein that enhances the interaction between heteromeric, adenine-rich transcripts and the exosome.</text>
</comment>
<comment type="catalytic activity">
    <reaction evidence="1">
        <text>ssDNA + n NTP = ssDNA/pppN(pN)n-1 hybrid + (n-1) diphosphate.</text>
        <dbReference type="EC" id="2.7.7.101"/>
    </reaction>
</comment>
<comment type="cofactor">
    <cofactor evidence="1">
        <name>Mg(2+)</name>
        <dbReference type="ChEBI" id="CHEBI:18420"/>
    </cofactor>
    <text evidence="1">Binds two Mg(2+) per subunit.</text>
</comment>
<comment type="subunit">
    <text evidence="1">Forms a ternary complex with MCM helicase and DNA. Component of the archaeal exosome complex.</text>
</comment>
<comment type="similarity">
    <text evidence="1">Belongs to the archaeal DnaG primase family.</text>
</comment>
<name>DNAG_PYRHO</name>
<sequence length="447" mass="50269">MKREKAIIRQLISEKKRFEKIKEGDVMAGKDDFGTTKYIIHAEFEANGVVERPDVVGAIFGQTEGLLGDDLDLRELQKTGRIGRIKVEVHTKAGKSYGTILVPSSLDRVETAIIAAALETIDRVGPCEAKIRVVKIEDVRASKRKYIIERAKEILETLIEEEIPETQELVEEVRKAVREMELIEYGPEKLPAGPHVPFSDSIIVVEGRADVLNLLRHGIKNAIAVEGTSIPETIIKLSKERIVTAFTDGDRGGELILKELLQVADIDYVARAPEGKEVEELTKKEIIKALRSKVPAEEVYNELFNKGKSFYEIVREREGKVKEEPQEKAETQPKQQVKVNEKIVKPLPVIKQDYKGFEEFVERVKNSPDPVALLLDENKNIIAEVHTRDLLNAIEENDGVYAIVFNGIITQRLIDVVSEKGVRYLIGAKKANVVRRPITLKVITFAD</sequence>
<proteinExistence type="inferred from homology"/>
<dbReference type="EC" id="2.7.7.101" evidence="1"/>
<dbReference type="EMBL" id="BA000001">
    <property type="protein sequence ID" value="BAA30812.1"/>
    <property type="molecule type" value="Genomic_DNA"/>
</dbReference>
<dbReference type="PIR" id="E71177">
    <property type="entry name" value="E71177"/>
</dbReference>
<dbReference type="RefSeq" id="WP_010885764.1">
    <property type="nucleotide sequence ID" value="NC_000961.1"/>
</dbReference>
<dbReference type="SMR" id="O59362"/>
<dbReference type="STRING" id="70601.gene:9378694"/>
<dbReference type="EnsemblBacteria" id="BAA30812">
    <property type="protein sequence ID" value="BAA30812"/>
    <property type="gene ID" value="BAA30812"/>
</dbReference>
<dbReference type="GeneID" id="1442545"/>
<dbReference type="KEGG" id="pho:PH1699"/>
<dbReference type="eggNOG" id="arCOG04281">
    <property type="taxonomic scope" value="Archaea"/>
</dbReference>
<dbReference type="OrthoDB" id="8643at2157"/>
<dbReference type="Proteomes" id="UP000000752">
    <property type="component" value="Chromosome"/>
</dbReference>
<dbReference type="GO" id="GO:0005737">
    <property type="term" value="C:cytoplasm"/>
    <property type="evidence" value="ECO:0007669"/>
    <property type="project" value="TreeGrafter"/>
</dbReference>
<dbReference type="GO" id="GO:0000428">
    <property type="term" value="C:DNA-directed RNA polymerase complex"/>
    <property type="evidence" value="ECO:0007669"/>
    <property type="project" value="UniProtKB-KW"/>
</dbReference>
<dbReference type="GO" id="GO:0000178">
    <property type="term" value="C:exosome (RNase complex)"/>
    <property type="evidence" value="ECO:0007669"/>
    <property type="project" value="UniProtKB-KW"/>
</dbReference>
<dbReference type="GO" id="GO:1990077">
    <property type="term" value="C:primosome complex"/>
    <property type="evidence" value="ECO:0007669"/>
    <property type="project" value="UniProtKB-KW"/>
</dbReference>
<dbReference type="GO" id="GO:0003899">
    <property type="term" value="F:DNA-directed RNA polymerase activity"/>
    <property type="evidence" value="ECO:0007669"/>
    <property type="project" value="InterPro"/>
</dbReference>
<dbReference type="GO" id="GO:0046872">
    <property type="term" value="F:metal ion binding"/>
    <property type="evidence" value="ECO:0007669"/>
    <property type="project" value="UniProtKB-KW"/>
</dbReference>
<dbReference type="GO" id="GO:0008143">
    <property type="term" value="F:poly(A) binding"/>
    <property type="evidence" value="ECO:0007669"/>
    <property type="project" value="InterPro"/>
</dbReference>
<dbReference type="GO" id="GO:0006269">
    <property type="term" value="P:DNA replication, synthesis of primer"/>
    <property type="evidence" value="ECO:0007669"/>
    <property type="project" value="UniProtKB-UniRule"/>
</dbReference>
<dbReference type="CDD" id="cd01029">
    <property type="entry name" value="TOPRIM_primases"/>
    <property type="match status" value="1"/>
</dbReference>
<dbReference type="FunFam" id="3.40.1360.10:FF:000010">
    <property type="entry name" value="DNA primase DnaG"/>
    <property type="match status" value="1"/>
</dbReference>
<dbReference type="Gene3D" id="3.40.1360.10">
    <property type="match status" value="1"/>
</dbReference>
<dbReference type="HAMAP" id="MF_00007">
    <property type="entry name" value="DNA_primase_DnaG_arc"/>
    <property type="match status" value="1"/>
</dbReference>
<dbReference type="InterPro" id="IPR050219">
    <property type="entry name" value="DnaG_primase"/>
</dbReference>
<dbReference type="InterPro" id="IPR020607">
    <property type="entry name" value="Primase_DnaG_arc"/>
</dbReference>
<dbReference type="InterPro" id="IPR034154">
    <property type="entry name" value="TOPRIM_DnaG/twinkle"/>
</dbReference>
<dbReference type="InterPro" id="IPR006171">
    <property type="entry name" value="TOPRIM_dom"/>
</dbReference>
<dbReference type="NCBIfam" id="NF003108">
    <property type="entry name" value="PRK04031.1-1"/>
    <property type="match status" value="1"/>
</dbReference>
<dbReference type="PANTHER" id="PTHR30313">
    <property type="entry name" value="DNA PRIMASE"/>
    <property type="match status" value="1"/>
</dbReference>
<dbReference type="PANTHER" id="PTHR30313:SF2">
    <property type="entry name" value="DNA PRIMASE"/>
    <property type="match status" value="1"/>
</dbReference>
<dbReference type="Pfam" id="PF13662">
    <property type="entry name" value="Toprim_4"/>
    <property type="match status" value="1"/>
</dbReference>
<dbReference type="SMART" id="SM00493">
    <property type="entry name" value="TOPRIM"/>
    <property type="match status" value="1"/>
</dbReference>
<dbReference type="SUPFAM" id="SSF56731">
    <property type="entry name" value="DNA primase core"/>
    <property type="match status" value="1"/>
</dbReference>
<dbReference type="PROSITE" id="PS50880">
    <property type="entry name" value="TOPRIM"/>
    <property type="match status" value="1"/>
</dbReference>
<reference key="1">
    <citation type="journal article" date="1998" name="DNA Res.">
        <title>Complete sequence and gene organization of the genome of a hyper-thermophilic archaebacterium, Pyrococcus horikoshii OT3.</title>
        <authorList>
            <person name="Kawarabayasi Y."/>
            <person name="Sawada M."/>
            <person name="Horikawa H."/>
            <person name="Haikawa Y."/>
            <person name="Hino Y."/>
            <person name="Yamamoto S."/>
            <person name="Sekine M."/>
            <person name="Baba S."/>
            <person name="Kosugi H."/>
            <person name="Hosoyama A."/>
            <person name="Nagai Y."/>
            <person name="Sakai M."/>
            <person name="Ogura K."/>
            <person name="Otsuka R."/>
            <person name="Nakazawa H."/>
            <person name="Takamiya M."/>
            <person name="Ohfuku Y."/>
            <person name="Funahashi T."/>
            <person name="Tanaka T."/>
            <person name="Kudoh Y."/>
            <person name="Yamazaki J."/>
            <person name="Kushida N."/>
            <person name="Oguchi A."/>
            <person name="Aoki K."/>
            <person name="Yoshizawa T."/>
            <person name="Nakamura Y."/>
            <person name="Robb F.T."/>
            <person name="Horikoshi K."/>
            <person name="Masuchi Y."/>
            <person name="Shizuya H."/>
            <person name="Kikuchi H."/>
        </authorList>
    </citation>
    <scope>NUCLEOTIDE SEQUENCE [LARGE SCALE GENOMIC DNA]</scope>
    <source>
        <strain>ATCC 700860 / DSM 12428 / JCM 9974 / NBRC 100139 / OT-3</strain>
    </source>
</reference>
<evidence type="ECO:0000255" key="1">
    <source>
        <dbReference type="HAMAP-Rule" id="MF_00007"/>
    </source>
</evidence>
<feature type="chain" id="PRO_0000144130" description="DNA primase DnaG">
    <location>
        <begin position="1"/>
        <end position="447"/>
    </location>
</feature>
<feature type="domain" description="Toprim" evidence="1">
    <location>
        <begin position="200"/>
        <end position="274"/>
    </location>
</feature>
<feature type="binding site" evidence="1">
    <location>
        <position position="206"/>
    </location>
    <ligand>
        <name>Mg(2+)</name>
        <dbReference type="ChEBI" id="CHEBI:18420"/>
        <label>1</label>
        <note>catalytic</note>
    </ligand>
</feature>
<feature type="binding site" evidence="1">
    <location>
        <position position="248"/>
    </location>
    <ligand>
        <name>Mg(2+)</name>
        <dbReference type="ChEBI" id="CHEBI:18420"/>
        <label>1</label>
        <note>catalytic</note>
    </ligand>
</feature>
<feature type="binding site" evidence="1">
    <location>
        <position position="248"/>
    </location>
    <ligand>
        <name>Mg(2+)</name>
        <dbReference type="ChEBI" id="CHEBI:18420"/>
        <label>2</label>
    </ligand>
</feature>
<feature type="binding site" evidence="1">
    <location>
        <position position="250"/>
    </location>
    <ligand>
        <name>Mg(2+)</name>
        <dbReference type="ChEBI" id="CHEBI:18420"/>
        <label>2</label>
    </ligand>
</feature>
<accession>O59362</accession>